<dbReference type="EMBL" id="CP000312">
    <property type="protein sequence ID" value="ABG86864.1"/>
    <property type="molecule type" value="Genomic_DNA"/>
</dbReference>
<dbReference type="RefSeq" id="WP_003459781.1">
    <property type="nucleotide sequence ID" value="NZ_CAXVKH010000001.1"/>
</dbReference>
<dbReference type="SMR" id="Q0SSC3"/>
<dbReference type="GeneID" id="93001765"/>
<dbReference type="KEGG" id="cpr:CPR_1669"/>
<dbReference type="Proteomes" id="UP000001824">
    <property type="component" value="Chromosome"/>
</dbReference>
<dbReference type="GO" id="GO:0005737">
    <property type="term" value="C:cytoplasm"/>
    <property type="evidence" value="ECO:0007669"/>
    <property type="project" value="UniProtKB-SubCell"/>
</dbReference>
<dbReference type="GO" id="GO:0043023">
    <property type="term" value="F:ribosomal large subunit binding"/>
    <property type="evidence" value="ECO:0007669"/>
    <property type="project" value="TreeGrafter"/>
</dbReference>
<dbReference type="GO" id="GO:0006415">
    <property type="term" value="P:translational termination"/>
    <property type="evidence" value="ECO:0007669"/>
    <property type="project" value="UniProtKB-UniRule"/>
</dbReference>
<dbReference type="CDD" id="cd00520">
    <property type="entry name" value="RRF"/>
    <property type="match status" value="1"/>
</dbReference>
<dbReference type="FunFam" id="1.10.132.20:FF:000001">
    <property type="entry name" value="Ribosome-recycling factor"/>
    <property type="match status" value="1"/>
</dbReference>
<dbReference type="FunFam" id="3.30.1360.40:FF:000001">
    <property type="entry name" value="Ribosome-recycling factor"/>
    <property type="match status" value="1"/>
</dbReference>
<dbReference type="Gene3D" id="3.30.1360.40">
    <property type="match status" value="1"/>
</dbReference>
<dbReference type="Gene3D" id="1.10.132.20">
    <property type="entry name" value="Ribosome-recycling factor"/>
    <property type="match status" value="1"/>
</dbReference>
<dbReference type="HAMAP" id="MF_00040">
    <property type="entry name" value="RRF"/>
    <property type="match status" value="1"/>
</dbReference>
<dbReference type="InterPro" id="IPR002661">
    <property type="entry name" value="Ribosome_recyc_fac"/>
</dbReference>
<dbReference type="InterPro" id="IPR023584">
    <property type="entry name" value="Ribosome_recyc_fac_dom"/>
</dbReference>
<dbReference type="InterPro" id="IPR036191">
    <property type="entry name" value="RRF_sf"/>
</dbReference>
<dbReference type="NCBIfam" id="TIGR00496">
    <property type="entry name" value="frr"/>
    <property type="match status" value="1"/>
</dbReference>
<dbReference type="PANTHER" id="PTHR20982:SF3">
    <property type="entry name" value="MITOCHONDRIAL RIBOSOME RECYCLING FACTOR PSEUDO 1"/>
    <property type="match status" value="1"/>
</dbReference>
<dbReference type="PANTHER" id="PTHR20982">
    <property type="entry name" value="RIBOSOME RECYCLING FACTOR"/>
    <property type="match status" value="1"/>
</dbReference>
<dbReference type="Pfam" id="PF01765">
    <property type="entry name" value="RRF"/>
    <property type="match status" value="1"/>
</dbReference>
<dbReference type="SUPFAM" id="SSF55194">
    <property type="entry name" value="Ribosome recycling factor, RRF"/>
    <property type="match status" value="1"/>
</dbReference>
<reference key="1">
    <citation type="journal article" date="2006" name="Genome Res.">
        <title>Skewed genomic variability in strains of the toxigenic bacterial pathogen, Clostridium perfringens.</title>
        <authorList>
            <person name="Myers G.S.A."/>
            <person name="Rasko D.A."/>
            <person name="Cheung J.K."/>
            <person name="Ravel J."/>
            <person name="Seshadri R."/>
            <person name="DeBoy R.T."/>
            <person name="Ren Q."/>
            <person name="Varga J."/>
            <person name="Awad M.M."/>
            <person name="Brinkac L.M."/>
            <person name="Daugherty S.C."/>
            <person name="Haft D.H."/>
            <person name="Dodson R.J."/>
            <person name="Madupu R."/>
            <person name="Nelson W.C."/>
            <person name="Rosovitz M.J."/>
            <person name="Sullivan S.A."/>
            <person name="Khouri H."/>
            <person name="Dimitrov G.I."/>
            <person name="Watkins K.L."/>
            <person name="Mulligan S."/>
            <person name="Benton J."/>
            <person name="Radune D."/>
            <person name="Fisher D.J."/>
            <person name="Atkins H.S."/>
            <person name="Hiscox T."/>
            <person name="Jost B.H."/>
            <person name="Billington S.J."/>
            <person name="Songer J.G."/>
            <person name="McClane B.A."/>
            <person name="Titball R.W."/>
            <person name="Rood J.I."/>
            <person name="Melville S.B."/>
            <person name="Paulsen I.T."/>
        </authorList>
    </citation>
    <scope>NUCLEOTIDE SEQUENCE [LARGE SCALE GENOMIC DNA]</scope>
    <source>
        <strain>SM101 / Type A</strain>
    </source>
</reference>
<proteinExistence type="inferred from homology"/>
<sequence>MIKDVIKKSEEKMNKTINSLNSELATMKAGRANPTMLDRIQVEYYGSMCPLNQVANVSSPEPRLLVITPWEKPMLKEIEKAILKSDLGINPNNDGTIIRLLVPELTEETRKNLVKNVKKVGEQAKVAIRSIRKDANDKVKNFKKEGTITEDEMKKGEDDIQKVTDKFVKEIDTIVAAKEKEIMSI</sequence>
<feature type="chain" id="PRO_1000003146" description="Ribosome-recycling factor">
    <location>
        <begin position="1"/>
        <end position="185"/>
    </location>
</feature>
<evidence type="ECO:0000255" key="1">
    <source>
        <dbReference type="HAMAP-Rule" id="MF_00040"/>
    </source>
</evidence>
<name>RRF_CLOPS</name>
<comment type="function">
    <text evidence="1">Responsible for the release of ribosomes from messenger RNA at the termination of protein biosynthesis. May increase the efficiency of translation by recycling ribosomes from one round of translation to another.</text>
</comment>
<comment type="subcellular location">
    <subcellularLocation>
        <location evidence="1">Cytoplasm</location>
    </subcellularLocation>
</comment>
<comment type="similarity">
    <text evidence="1">Belongs to the RRF family.</text>
</comment>
<organism>
    <name type="scientific">Clostridium perfringens (strain SM101 / Type A)</name>
    <dbReference type="NCBI Taxonomy" id="289380"/>
    <lineage>
        <taxon>Bacteria</taxon>
        <taxon>Bacillati</taxon>
        <taxon>Bacillota</taxon>
        <taxon>Clostridia</taxon>
        <taxon>Eubacteriales</taxon>
        <taxon>Clostridiaceae</taxon>
        <taxon>Clostridium</taxon>
    </lineage>
</organism>
<keyword id="KW-0963">Cytoplasm</keyword>
<keyword id="KW-0648">Protein biosynthesis</keyword>
<protein>
    <recommendedName>
        <fullName evidence="1">Ribosome-recycling factor</fullName>
        <shortName evidence="1">RRF</shortName>
    </recommendedName>
    <alternativeName>
        <fullName evidence="1">Ribosome-releasing factor</fullName>
    </alternativeName>
</protein>
<gene>
    <name evidence="1" type="primary">frr</name>
    <name type="ordered locus">CPR_1669</name>
</gene>
<accession>Q0SSC3</accession>